<accession>O28785</accession>
<protein>
    <recommendedName>
        <fullName>Uncharacterized protein AF_1487</fullName>
    </recommendedName>
</protein>
<proteinExistence type="predicted"/>
<feature type="chain" id="PRO_0000128010" description="Uncharacterized protein AF_1487">
    <location>
        <begin position="1"/>
        <end position="219"/>
    </location>
</feature>
<feature type="transmembrane region" description="Helical" evidence="1">
    <location>
        <begin position="8"/>
        <end position="28"/>
    </location>
</feature>
<feature type="transmembrane region" description="Helical" evidence="1">
    <location>
        <begin position="194"/>
        <end position="214"/>
    </location>
</feature>
<keyword id="KW-1003">Cell membrane</keyword>
<keyword id="KW-0472">Membrane</keyword>
<keyword id="KW-1185">Reference proteome</keyword>
<keyword id="KW-0812">Transmembrane</keyword>
<keyword id="KW-1133">Transmembrane helix</keyword>
<evidence type="ECO:0000255" key="1"/>
<evidence type="ECO:0000305" key="2"/>
<reference key="1">
    <citation type="journal article" date="1997" name="Nature">
        <title>The complete genome sequence of the hyperthermophilic, sulphate-reducing archaeon Archaeoglobus fulgidus.</title>
        <authorList>
            <person name="Klenk H.-P."/>
            <person name="Clayton R.A."/>
            <person name="Tomb J.-F."/>
            <person name="White O."/>
            <person name="Nelson K.E."/>
            <person name="Ketchum K.A."/>
            <person name="Dodson R.J."/>
            <person name="Gwinn M.L."/>
            <person name="Hickey E.K."/>
            <person name="Peterson J.D."/>
            <person name="Richardson D.L."/>
            <person name="Kerlavage A.R."/>
            <person name="Graham D.E."/>
            <person name="Kyrpides N.C."/>
            <person name="Fleischmann R.D."/>
            <person name="Quackenbush J."/>
            <person name="Lee N.H."/>
            <person name="Sutton G.G."/>
            <person name="Gill S.R."/>
            <person name="Kirkness E.F."/>
            <person name="Dougherty B.A."/>
            <person name="McKenney K."/>
            <person name="Adams M.D."/>
            <person name="Loftus B.J."/>
            <person name="Peterson S.N."/>
            <person name="Reich C.I."/>
            <person name="McNeil L.K."/>
            <person name="Badger J.H."/>
            <person name="Glodek A."/>
            <person name="Zhou L."/>
            <person name="Overbeek R."/>
            <person name="Gocayne J.D."/>
            <person name="Weidman J.F."/>
            <person name="McDonald L.A."/>
            <person name="Utterback T.R."/>
            <person name="Cotton M.D."/>
            <person name="Spriggs T."/>
            <person name="Artiach P."/>
            <person name="Kaine B.P."/>
            <person name="Sykes S.M."/>
            <person name="Sadow P.W."/>
            <person name="D'Andrea K.P."/>
            <person name="Bowman C."/>
            <person name="Fujii C."/>
            <person name="Garland S.A."/>
            <person name="Mason T.M."/>
            <person name="Olsen G.J."/>
            <person name="Fraser C.M."/>
            <person name="Smith H.O."/>
            <person name="Woese C.R."/>
            <person name="Venter J.C."/>
        </authorList>
    </citation>
    <scope>NUCLEOTIDE SEQUENCE [LARGE SCALE GENOMIC DNA]</scope>
    <source>
        <strain>ATCC 49558 / DSM 4304 / JCM 9628 / NBRC 100126 / VC-16</strain>
    </source>
</reference>
<organism>
    <name type="scientific">Archaeoglobus fulgidus (strain ATCC 49558 / DSM 4304 / JCM 9628 / NBRC 100126 / VC-16)</name>
    <dbReference type="NCBI Taxonomy" id="224325"/>
    <lineage>
        <taxon>Archaea</taxon>
        <taxon>Methanobacteriati</taxon>
        <taxon>Methanobacteriota</taxon>
        <taxon>Archaeoglobi</taxon>
        <taxon>Archaeoglobales</taxon>
        <taxon>Archaeoglobaceae</taxon>
        <taxon>Archaeoglobus</taxon>
    </lineage>
</organism>
<sequence length="219" mass="24029">MSDMRRLMILFLLVGLAVVLSGCATLSVHSKVNKDGSVESYKLVINTSSFVYGLLAEGAKKEGYESLRESFLSEIPEEMRDKVSYDEVWSGDQVSIIIEARDYVPADDDKVKIRKENGFLIYEDLSFASENNQTSSNELGNALLSSFSLHYYLEMPGKIVESNANVVKDNKAEWHLTGASAFNTRIYAKSEVPGIPGFEAALAIVGLLAAGLLFGRVKG</sequence>
<name>Y1487_ARCFU</name>
<gene>
    <name type="ordered locus">AF_1487</name>
</gene>
<dbReference type="EMBL" id="AE000782">
    <property type="protein sequence ID" value="AAB89768.1"/>
    <property type="molecule type" value="Genomic_DNA"/>
</dbReference>
<dbReference type="PIR" id="F69435">
    <property type="entry name" value="F69435"/>
</dbReference>
<dbReference type="STRING" id="224325.AF_1487"/>
<dbReference type="PaxDb" id="224325-AF_1487"/>
<dbReference type="DNASU" id="1484713"/>
<dbReference type="EnsemblBacteria" id="AAB89768">
    <property type="protein sequence ID" value="AAB89768"/>
    <property type="gene ID" value="AF_1487"/>
</dbReference>
<dbReference type="KEGG" id="afu:AF_1487"/>
<dbReference type="eggNOG" id="arCOG04436">
    <property type="taxonomic scope" value="Archaea"/>
</dbReference>
<dbReference type="HOGENOM" id="CLU_080077_0_0_2"/>
<dbReference type="Proteomes" id="UP000002199">
    <property type="component" value="Chromosome"/>
</dbReference>
<dbReference type="GO" id="GO:0005886">
    <property type="term" value="C:plasma membrane"/>
    <property type="evidence" value="ECO:0007669"/>
    <property type="project" value="UniProtKB-SubCell"/>
</dbReference>
<dbReference type="InterPro" id="IPR026371">
    <property type="entry name" value="PGF_CTERM"/>
</dbReference>
<dbReference type="NCBIfam" id="TIGR04126">
    <property type="entry name" value="PGF_CTERM"/>
    <property type="match status" value="1"/>
</dbReference>
<dbReference type="Pfam" id="PF18204">
    <property type="entry name" value="PGF-CTERM"/>
    <property type="match status" value="1"/>
</dbReference>
<comment type="subcellular location">
    <subcellularLocation>
        <location evidence="2">Cell membrane</location>
        <topology evidence="2">Multi-pass membrane protein</topology>
    </subcellularLocation>
</comment>